<keyword id="KW-0963">Cytoplasm</keyword>
<keyword id="KW-0378">Hydrolase</keyword>
<keyword id="KW-0645">Protease</keyword>
<keyword id="KW-1185">Reference proteome</keyword>
<keyword id="KW-0720">Serine protease</keyword>
<name>CLPP_ALIB4</name>
<sequence>MSYIPYVVEKTGRGERSYDIYSRLLKDRIIMLSGEINDAVASTVVAQLLFLEAEDPDKDIYLYINSPGGVVTSGMSIFDTMNYIKPDVCTICIGQAASMGAFLLSSGAKGKRYSLPNSRIMIHQPLGGARGQATDIQIQAKEIQRLKDTLNGILASQTGQDFATIEKDTDRDNFMSAEEACSYGLIDEVITKHK</sequence>
<feature type="chain" id="PRO_1000060257" description="ATP-dependent Clp protease proteolytic subunit">
    <location>
        <begin position="1"/>
        <end position="194"/>
    </location>
</feature>
<feature type="active site" description="Nucleophile" evidence="1">
    <location>
        <position position="98"/>
    </location>
</feature>
<feature type="active site" evidence="1">
    <location>
        <position position="123"/>
    </location>
</feature>
<dbReference type="EC" id="3.4.21.92" evidence="1"/>
<dbReference type="EMBL" id="CP000361">
    <property type="protein sequence ID" value="ABV67948.1"/>
    <property type="molecule type" value="Genomic_DNA"/>
</dbReference>
<dbReference type="RefSeq" id="WP_004509888.1">
    <property type="nucleotide sequence ID" value="NC_009850.1"/>
</dbReference>
<dbReference type="SMR" id="A8EVH5"/>
<dbReference type="STRING" id="367737.Abu_1701"/>
<dbReference type="MEROPS" id="S14.001"/>
<dbReference type="GeneID" id="24303808"/>
<dbReference type="KEGG" id="abu:Abu_1701"/>
<dbReference type="eggNOG" id="COG0740">
    <property type="taxonomic scope" value="Bacteria"/>
</dbReference>
<dbReference type="HOGENOM" id="CLU_058707_3_2_7"/>
<dbReference type="Proteomes" id="UP000001136">
    <property type="component" value="Chromosome"/>
</dbReference>
<dbReference type="GO" id="GO:0005737">
    <property type="term" value="C:cytoplasm"/>
    <property type="evidence" value="ECO:0007669"/>
    <property type="project" value="UniProtKB-SubCell"/>
</dbReference>
<dbReference type="GO" id="GO:0009368">
    <property type="term" value="C:endopeptidase Clp complex"/>
    <property type="evidence" value="ECO:0007669"/>
    <property type="project" value="TreeGrafter"/>
</dbReference>
<dbReference type="GO" id="GO:0004176">
    <property type="term" value="F:ATP-dependent peptidase activity"/>
    <property type="evidence" value="ECO:0007669"/>
    <property type="project" value="InterPro"/>
</dbReference>
<dbReference type="GO" id="GO:0051117">
    <property type="term" value="F:ATPase binding"/>
    <property type="evidence" value="ECO:0007669"/>
    <property type="project" value="TreeGrafter"/>
</dbReference>
<dbReference type="GO" id="GO:0004252">
    <property type="term" value="F:serine-type endopeptidase activity"/>
    <property type="evidence" value="ECO:0007669"/>
    <property type="project" value="UniProtKB-UniRule"/>
</dbReference>
<dbReference type="GO" id="GO:0006515">
    <property type="term" value="P:protein quality control for misfolded or incompletely synthesized proteins"/>
    <property type="evidence" value="ECO:0007669"/>
    <property type="project" value="TreeGrafter"/>
</dbReference>
<dbReference type="CDD" id="cd07017">
    <property type="entry name" value="S14_ClpP_2"/>
    <property type="match status" value="1"/>
</dbReference>
<dbReference type="FunFam" id="3.90.226.10:FF:000001">
    <property type="entry name" value="ATP-dependent Clp protease proteolytic subunit"/>
    <property type="match status" value="1"/>
</dbReference>
<dbReference type="Gene3D" id="3.90.226.10">
    <property type="entry name" value="2-enoyl-CoA Hydratase, Chain A, domain 1"/>
    <property type="match status" value="1"/>
</dbReference>
<dbReference type="HAMAP" id="MF_00444">
    <property type="entry name" value="ClpP"/>
    <property type="match status" value="1"/>
</dbReference>
<dbReference type="InterPro" id="IPR001907">
    <property type="entry name" value="ClpP"/>
</dbReference>
<dbReference type="InterPro" id="IPR029045">
    <property type="entry name" value="ClpP/crotonase-like_dom_sf"/>
</dbReference>
<dbReference type="InterPro" id="IPR023562">
    <property type="entry name" value="ClpP/TepA"/>
</dbReference>
<dbReference type="InterPro" id="IPR033135">
    <property type="entry name" value="ClpP_His_AS"/>
</dbReference>
<dbReference type="InterPro" id="IPR018215">
    <property type="entry name" value="ClpP_Ser_AS"/>
</dbReference>
<dbReference type="NCBIfam" id="TIGR00493">
    <property type="entry name" value="clpP"/>
    <property type="match status" value="1"/>
</dbReference>
<dbReference type="NCBIfam" id="NF001368">
    <property type="entry name" value="PRK00277.1"/>
    <property type="match status" value="1"/>
</dbReference>
<dbReference type="NCBIfam" id="NF009205">
    <property type="entry name" value="PRK12553.1"/>
    <property type="match status" value="1"/>
</dbReference>
<dbReference type="PANTHER" id="PTHR10381">
    <property type="entry name" value="ATP-DEPENDENT CLP PROTEASE PROTEOLYTIC SUBUNIT"/>
    <property type="match status" value="1"/>
</dbReference>
<dbReference type="PANTHER" id="PTHR10381:SF70">
    <property type="entry name" value="ATP-DEPENDENT CLP PROTEASE PROTEOLYTIC SUBUNIT"/>
    <property type="match status" value="1"/>
</dbReference>
<dbReference type="Pfam" id="PF00574">
    <property type="entry name" value="CLP_protease"/>
    <property type="match status" value="1"/>
</dbReference>
<dbReference type="PRINTS" id="PR00127">
    <property type="entry name" value="CLPPROTEASEP"/>
</dbReference>
<dbReference type="SUPFAM" id="SSF52096">
    <property type="entry name" value="ClpP/crotonase"/>
    <property type="match status" value="1"/>
</dbReference>
<dbReference type="PROSITE" id="PS00382">
    <property type="entry name" value="CLP_PROTEASE_HIS"/>
    <property type="match status" value="1"/>
</dbReference>
<dbReference type="PROSITE" id="PS00381">
    <property type="entry name" value="CLP_PROTEASE_SER"/>
    <property type="match status" value="1"/>
</dbReference>
<comment type="function">
    <text evidence="1">Cleaves peptides in various proteins in a process that requires ATP hydrolysis. Has a chymotrypsin-like activity. Plays a major role in the degradation of misfolded proteins.</text>
</comment>
<comment type="catalytic activity">
    <reaction evidence="1">
        <text>Hydrolysis of proteins to small peptides in the presence of ATP and magnesium. alpha-casein is the usual test substrate. In the absence of ATP, only oligopeptides shorter than five residues are hydrolyzed (such as succinyl-Leu-Tyr-|-NHMec, and Leu-Tyr-Leu-|-Tyr-Trp, in which cleavage of the -Tyr-|-Leu- and -Tyr-|-Trp bonds also occurs).</text>
        <dbReference type="EC" id="3.4.21.92"/>
    </reaction>
</comment>
<comment type="subunit">
    <text evidence="1">Fourteen ClpP subunits assemble into 2 heptameric rings which stack back to back to give a disk-like structure with a central cavity, resembling the structure of eukaryotic proteasomes.</text>
</comment>
<comment type="subcellular location">
    <subcellularLocation>
        <location evidence="1">Cytoplasm</location>
    </subcellularLocation>
</comment>
<comment type="similarity">
    <text evidence="1">Belongs to the peptidase S14 family.</text>
</comment>
<organism>
    <name type="scientific">Aliarcobacter butzleri (strain RM4018)</name>
    <name type="common">Arcobacter butzleri</name>
    <dbReference type="NCBI Taxonomy" id="367737"/>
    <lineage>
        <taxon>Bacteria</taxon>
        <taxon>Pseudomonadati</taxon>
        <taxon>Campylobacterota</taxon>
        <taxon>Epsilonproteobacteria</taxon>
        <taxon>Campylobacterales</taxon>
        <taxon>Arcobacteraceae</taxon>
        <taxon>Aliarcobacter</taxon>
    </lineage>
</organism>
<proteinExistence type="inferred from homology"/>
<accession>A8EVH5</accession>
<protein>
    <recommendedName>
        <fullName evidence="1">ATP-dependent Clp protease proteolytic subunit</fullName>
        <ecNumber evidence="1">3.4.21.92</ecNumber>
    </recommendedName>
    <alternativeName>
        <fullName evidence="1">Endopeptidase Clp</fullName>
    </alternativeName>
</protein>
<reference key="1">
    <citation type="journal article" date="2007" name="PLoS ONE">
        <title>The complete genome sequence and analysis of the Epsilonproteobacterium Arcobacter butzleri.</title>
        <authorList>
            <person name="Miller W.G."/>
            <person name="Parker C.T."/>
            <person name="Rubenfield M."/>
            <person name="Mendz G.L."/>
            <person name="Woesten M.M.S.M."/>
            <person name="Ussery D.W."/>
            <person name="Stolz J.F."/>
            <person name="Binnewies T.T."/>
            <person name="Hallin P.F."/>
            <person name="Wang G."/>
            <person name="Malek J.A."/>
            <person name="Rogosin A."/>
            <person name="Stanker L.H."/>
            <person name="Mandrell R.E."/>
        </authorList>
    </citation>
    <scope>NUCLEOTIDE SEQUENCE [LARGE SCALE GENOMIC DNA]</scope>
    <source>
        <strain>RM4018</strain>
    </source>
</reference>
<evidence type="ECO:0000255" key="1">
    <source>
        <dbReference type="HAMAP-Rule" id="MF_00444"/>
    </source>
</evidence>
<gene>
    <name evidence="1" type="primary">clpP</name>
    <name type="ordered locus">Abu_1701</name>
</gene>